<dbReference type="EMBL" id="CP000769">
    <property type="protein sequence ID" value="ABS26139.1"/>
    <property type="status" value="ALT_INIT"/>
    <property type="molecule type" value="Genomic_DNA"/>
</dbReference>
<dbReference type="RefSeq" id="WP_200860916.1">
    <property type="nucleotide sequence ID" value="NC_009675.1"/>
</dbReference>
<dbReference type="SMR" id="A7HBP3"/>
<dbReference type="STRING" id="404589.Anae109_1936"/>
<dbReference type="KEGG" id="afw:Anae109_1936"/>
<dbReference type="eggNOG" id="COG0100">
    <property type="taxonomic scope" value="Bacteria"/>
</dbReference>
<dbReference type="HOGENOM" id="CLU_072439_5_0_7"/>
<dbReference type="Proteomes" id="UP000006382">
    <property type="component" value="Chromosome"/>
</dbReference>
<dbReference type="GO" id="GO:1990904">
    <property type="term" value="C:ribonucleoprotein complex"/>
    <property type="evidence" value="ECO:0007669"/>
    <property type="project" value="UniProtKB-KW"/>
</dbReference>
<dbReference type="GO" id="GO:0005840">
    <property type="term" value="C:ribosome"/>
    <property type="evidence" value="ECO:0007669"/>
    <property type="project" value="UniProtKB-KW"/>
</dbReference>
<dbReference type="GO" id="GO:0019843">
    <property type="term" value="F:rRNA binding"/>
    <property type="evidence" value="ECO:0007669"/>
    <property type="project" value="UniProtKB-UniRule"/>
</dbReference>
<dbReference type="GO" id="GO:0003735">
    <property type="term" value="F:structural constituent of ribosome"/>
    <property type="evidence" value="ECO:0007669"/>
    <property type="project" value="InterPro"/>
</dbReference>
<dbReference type="GO" id="GO:0006412">
    <property type="term" value="P:translation"/>
    <property type="evidence" value="ECO:0007669"/>
    <property type="project" value="UniProtKB-UniRule"/>
</dbReference>
<dbReference type="FunFam" id="3.30.420.80:FF:000001">
    <property type="entry name" value="30S ribosomal protein S11"/>
    <property type="match status" value="1"/>
</dbReference>
<dbReference type="Gene3D" id="3.30.420.80">
    <property type="entry name" value="Ribosomal protein S11"/>
    <property type="match status" value="1"/>
</dbReference>
<dbReference type="HAMAP" id="MF_01310">
    <property type="entry name" value="Ribosomal_uS11"/>
    <property type="match status" value="1"/>
</dbReference>
<dbReference type="InterPro" id="IPR001971">
    <property type="entry name" value="Ribosomal_uS11"/>
</dbReference>
<dbReference type="InterPro" id="IPR019981">
    <property type="entry name" value="Ribosomal_uS11_bac-type"/>
</dbReference>
<dbReference type="InterPro" id="IPR018102">
    <property type="entry name" value="Ribosomal_uS11_CS"/>
</dbReference>
<dbReference type="InterPro" id="IPR036967">
    <property type="entry name" value="Ribosomal_uS11_sf"/>
</dbReference>
<dbReference type="NCBIfam" id="NF003698">
    <property type="entry name" value="PRK05309.1"/>
    <property type="match status" value="1"/>
</dbReference>
<dbReference type="NCBIfam" id="TIGR03632">
    <property type="entry name" value="uS11_bact"/>
    <property type="match status" value="1"/>
</dbReference>
<dbReference type="PANTHER" id="PTHR11759">
    <property type="entry name" value="40S RIBOSOMAL PROTEIN S14/30S RIBOSOMAL PROTEIN S11"/>
    <property type="match status" value="1"/>
</dbReference>
<dbReference type="Pfam" id="PF00411">
    <property type="entry name" value="Ribosomal_S11"/>
    <property type="match status" value="1"/>
</dbReference>
<dbReference type="PIRSF" id="PIRSF002131">
    <property type="entry name" value="Ribosomal_S11"/>
    <property type="match status" value="1"/>
</dbReference>
<dbReference type="SUPFAM" id="SSF53137">
    <property type="entry name" value="Translational machinery components"/>
    <property type="match status" value="1"/>
</dbReference>
<dbReference type="PROSITE" id="PS00054">
    <property type="entry name" value="RIBOSOMAL_S11"/>
    <property type="match status" value="1"/>
</dbReference>
<organism>
    <name type="scientific">Anaeromyxobacter sp. (strain Fw109-5)</name>
    <dbReference type="NCBI Taxonomy" id="404589"/>
    <lineage>
        <taxon>Bacteria</taxon>
        <taxon>Pseudomonadati</taxon>
        <taxon>Myxococcota</taxon>
        <taxon>Myxococcia</taxon>
        <taxon>Myxococcales</taxon>
        <taxon>Cystobacterineae</taxon>
        <taxon>Anaeromyxobacteraceae</taxon>
        <taxon>Anaeromyxobacter</taxon>
    </lineage>
</organism>
<protein>
    <recommendedName>
        <fullName evidence="1">Small ribosomal subunit protein uS11</fullName>
    </recommendedName>
    <alternativeName>
        <fullName evidence="2">30S ribosomal protein S11</fullName>
    </alternativeName>
</protein>
<proteinExistence type="inferred from homology"/>
<reference key="1">
    <citation type="journal article" date="2015" name="Genome Announc.">
        <title>Complete genome sequence of Anaeromyxobacter sp. Fw109-5, an anaerobic, metal-reducing bacterium isolated from a contaminated subsurface environment.</title>
        <authorList>
            <person name="Hwang C."/>
            <person name="Copeland A."/>
            <person name="Lucas S."/>
            <person name="Lapidus A."/>
            <person name="Barry K."/>
            <person name="Glavina Del Rio T."/>
            <person name="Dalin E."/>
            <person name="Tice H."/>
            <person name="Pitluck S."/>
            <person name="Sims D."/>
            <person name="Brettin T."/>
            <person name="Bruce D.C."/>
            <person name="Detter J.C."/>
            <person name="Han C.S."/>
            <person name="Schmutz J."/>
            <person name="Larimer F.W."/>
            <person name="Land M.L."/>
            <person name="Hauser L.J."/>
            <person name="Kyrpides N."/>
            <person name="Lykidis A."/>
            <person name="Richardson P."/>
            <person name="Belieav A."/>
            <person name="Sanford R.A."/>
            <person name="Loeffler F.E."/>
            <person name="Fields M.W."/>
        </authorList>
    </citation>
    <scope>NUCLEOTIDE SEQUENCE [LARGE SCALE GENOMIC DNA]</scope>
    <source>
        <strain>Fw109-5</strain>
    </source>
</reference>
<comment type="function">
    <text evidence="1">Located on the platform of the 30S subunit, it bridges several disparate RNA helices of the 16S rRNA. Forms part of the Shine-Dalgarno cleft in the 70S ribosome.</text>
</comment>
<comment type="subunit">
    <text evidence="1">Part of the 30S ribosomal subunit. Interacts with proteins S7 and S18. Binds to IF-3.</text>
</comment>
<comment type="similarity">
    <text evidence="1">Belongs to the universal ribosomal protein uS11 family.</text>
</comment>
<comment type="sequence caution" evidence="2">
    <conflict type="erroneous initiation">
        <sequence resource="EMBL-CDS" id="ABS26139"/>
    </conflict>
</comment>
<gene>
    <name evidence="1" type="primary">rpsK</name>
    <name type="ordered locus">Anae109_1936</name>
</gene>
<feature type="chain" id="PRO_0000323334" description="Small ribosomal subunit protein uS11">
    <location>
        <begin position="1"/>
        <end position="127"/>
    </location>
</feature>
<name>RS11_ANADF</name>
<sequence length="127" mass="13245">MTPKKGKKRVKKNIATGIVHIASTFNNTMITICDASGNVISWSSAGARGFKGSRKSTPFAAQVAAGDAAAKAMEHGLKTVSVVVKGPGAGRESALRALSAAGLKITLIRDVTPIPHNGCRPPKRRRV</sequence>
<keyword id="KW-1185">Reference proteome</keyword>
<keyword id="KW-0687">Ribonucleoprotein</keyword>
<keyword id="KW-0689">Ribosomal protein</keyword>
<keyword id="KW-0694">RNA-binding</keyword>
<keyword id="KW-0699">rRNA-binding</keyword>
<evidence type="ECO:0000255" key="1">
    <source>
        <dbReference type="HAMAP-Rule" id="MF_01310"/>
    </source>
</evidence>
<evidence type="ECO:0000305" key="2"/>
<accession>A7HBP3</accession>